<comment type="function">
    <text evidence="1">Dopamine receptor whose activity is mediated by G proteins which activate adenylyl cyclase.</text>
</comment>
<comment type="subcellular location">
    <subcellularLocation>
        <location>Cell membrane</location>
        <topology>Multi-pass membrane protein</topology>
    </subcellularLocation>
</comment>
<comment type="similarity">
    <text evidence="3">Belongs to the G-protein coupled receptor 1 family.</text>
</comment>
<dbReference type="EMBL" id="AK045456">
    <property type="protein sequence ID" value="BAC32378.1"/>
    <property type="molecule type" value="mRNA"/>
</dbReference>
<dbReference type="EMBL" id="AY255563">
    <property type="protein sequence ID" value="AAO85075.1"/>
    <property type="molecule type" value="mRNA"/>
</dbReference>
<dbReference type="EMBL" id="L20330">
    <property type="protein sequence ID" value="AAA16844.1"/>
    <property type="molecule type" value="mRNA"/>
</dbReference>
<dbReference type="CCDS" id="CCDS19255.1"/>
<dbReference type="PIR" id="A48909">
    <property type="entry name" value="A48909"/>
</dbReference>
<dbReference type="RefSeq" id="NP_038531.1">
    <property type="nucleotide sequence ID" value="NM_013503.4"/>
</dbReference>
<dbReference type="SMR" id="Q8BLD9"/>
<dbReference type="FunCoup" id="Q8BLD9">
    <property type="interactions" value="885"/>
</dbReference>
<dbReference type="STRING" id="10090.ENSMUSP00000039691"/>
<dbReference type="BindingDB" id="Q8BLD9"/>
<dbReference type="ChEMBL" id="CHEMBL2737"/>
<dbReference type="DrugCentral" id="Q8BLD9"/>
<dbReference type="GlyCosmos" id="Q8BLD9">
    <property type="glycosylation" value="1 site, No reported glycans"/>
</dbReference>
<dbReference type="GlyGen" id="Q8BLD9">
    <property type="glycosylation" value="2 sites"/>
</dbReference>
<dbReference type="iPTMnet" id="Q8BLD9"/>
<dbReference type="PhosphoSitePlus" id="Q8BLD9"/>
<dbReference type="jPOST" id="Q8BLD9"/>
<dbReference type="PaxDb" id="10090-ENSMUSP00000039691"/>
<dbReference type="ProteomicsDB" id="277495"/>
<dbReference type="Antibodypedia" id="9652">
    <property type="antibodies" value="422 antibodies from 39 providers"/>
</dbReference>
<dbReference type="DNASU" id="13492"/>
<dbReference type="Ensembl" id="ENSMUST00000041646.4">
    <property type="protein sequence ID" value="ENSMUSP00000039691.3"/>
    <property type="gene ID" value="ENSMUSG00000039358.4"/>
</dbReference>
<dbReference type="GeneID" id="13492"/>
<dbReference type="KEGG" id="mmu:13492"/>
<dbReference type="UCSC" id="uc008xgn.1">
    <property type="organism name" value="mouse"/>
</dbReference>
<dbReference type="AGR" id="MGI:94927"/>
<dbReference type="CTD" id="1816"/>
<dbReference type="MGI" id="MGI:94927">
    <property type="gene designation" value="Drd5"/>
</dbReference>
<dbReference type="VEuPathDB" id="HostDB:ENSMUSG00000039358"/>
<dbReference type="eggNOG" id="KOG3656">
    <property type="taxonomic scope" value="Eukaryota"/>
</dbReference>
<dbReference type="GeneTree" id="ENSGT00940000157037"/>
<dbReference type="HOGENOM" id="CLU_009579_11_0_1"/>
<dbReference type="InParanoid" id="Q8BLD9"/>
<dbReference type="OMA" id="IMVCSAV"/>
<dbReference type="OrthoDB" id="6021915at2759"/>
<dbReference type="PhylomeDB" id="Q8BLD9"/>
<dbReference type="TreeFam" id="TF325181"/>
<dbReference type="Reactome" id="R-MMU-390651">
    <property type="pathway name" value="Dopamine receptors"/>
</dbReference>
<dbReference type="Reactome" id="R-MMU-418555">
    <property type="pathway name" value="G alpha (s) signalling events"/>
</dbReference>
<dbReference type="BioGRID-ORCS" id="13492">
    <property type="hits" value="7 hits in 77 CRISPR screens"/>
</dbReference>
<dbReference type="PRO" id="PR:Q8BLD9"/>
<dbReference type="Proteomes" id="UP000000589">
    <property type="component" value="Chromosome 5"/>
</dbReference>
<dbReference type="RNAct" id="Q8BLD9">
    <property type="molecule type" value="protein"/>
</dbReference>
<dbReference type="Bgee" id="ENSMUSG00000039358">
    <property type="expression patterns" value="Expressed in trigeminal ganglion and 35 other cell types or tissues"/>
</dbReference>
<dbReference type="ExpressionAtlas" id="Q8BLD9">
    <property type="expression patterns" value="baseline and differential"/>
</dbReference>
<dbReference type="GO" id="GO:0031526">
    <property type="term" value="C:brush border membrane"/>
    <property type="evidence" value="ECO:0000314"/>
    <property type="project" value="MGI"/>
</dbReference>
<dbReference type="GO" id="GO:0060170">
    <property type="term" value="C:ciliary membrane"/>
    <property type="evidence" value="ECO:0007669"/>
    <property type="project" value="Ensembl"/>
</dbReference>
<dbReference type="GO" id="GO:0005929">
    <property type="term" value="C:cilium"/>
    <property type="evidence" value="ECO:0000266"/>
    <property type="project" value="MGI"/>
</dbReference>
<dbReference type="GO" id="GO:0097730">
    <property type="term" value="C:non-motile cilium"/>
    <property type="evidence" value="ECO:0007669"/>
    <property type="project" value="Ensembl"/>
</dbReference>
<dbReference type="GO" id="GO:0045202">
    <property type="term" value="C:synapse"/>
    <property type="evidence" value="ECO:0007669"/>
    <property type="project" value="GOC"/>
</dbReference>
<dbReference type="GO" id="GO:0035240">
    <property type="term" value="F:dopamine binding"/>
    <property type="evidence" value="ECO:0007669"/>
    <property type="project" value="Ensembl"/>
</dbReference>
<dbReference type="GO" id="GO:0004952">
    <property type="term" value="F:dopamine neurotransmitter receptor activity"/>
    <property type="evidence" value="ECO:0000266"/>
    <property type="project" value="MGI"/>
</dbReference>
<dbReference type="GO" id="GO:0001588">
    <property type="term" value="F:dopamine neurotransmitter receptor activity, coupled via Gs"/>
    <property type="evidence" value="ECO:0000314"/>
    <property type="project" value="MGI"/>
</dbReference>
<dbReference type="GO" id="GO:0004930">
    <property type="term" value="F:G protein-coupled receptor activity"/>
    <property type="evidence" value="ECO:0007669"/>
    <property type="project" value="UniProtKB-KW"/>
</dbReference>
<dbReference type="GO" id="GO:0007191">
    <property type="term" value="P:adenylate cyclase-activating dopamine receptor signaling pathway"/>
    <property type="evidence" value="ECO:0007669"/>
    <property type="project" value="Ensembl"/>
</dbReference>
<dbReference type="GO" id="GO:0007189">
    <property type="term" value="P:adenylate cyclase-activating G protein-coupled receptor signaling pathway"/>
    <property type="evidence" value="ECO:0000314"/>
    <property type="project" value="MGI"/>
</dbReference>
<dbReference type="GO" id="GO:0008306">
    <property type="term" value="P:associative learning"/>
    <property type="evidence" value="ECO:0000315"/>
    <property type="project" value="MGI"/>
</dbReference>
<dbReference type="GO" id="GO:0060292">
    <property type="term" value="P:long-term synaptic depression"/>
    <property type="evidence" value="ECO:0000315"/>
    <property type="project" value="MGI"/>
</dbReference>
<dbReference type="GO" id="GO:0007617">
    <property type="term" value="P:mating behavior"/>
    <property type="evidence" value="ECO:0000315"/>
    <property type="project" value="MGI"/>
</dbReference>
<dbReference type="GO" id="GO:0045776">
    <property type="term" value="P:negative regulation of blood pressure"/>
    <property type="evidence" value="ECO:0000315"/>
    <property type="project" value="MGI"/>
</dbReference>
<dbReference type="GO" id="GO:0001994">
    <property type="term" value="P:norepinephrine-epinephrine vasoconstriction involved in regulation of systemic arterial blood pressure"/>
    <property type="evidence" value="ECO:0000315"/>
    <property type="project" value="MGI"/>
</dbReference>
<dbReference type="GO" id="GO:0072593">
    <property type="term" value="P:reactive oxygen species metabolic process"/>
    <property type="evidence" value="ECO:0007669"/>
    <property type="project" value="Ensembl"/>
</dbReference>
<dbReference type="GO" id="GO:0045924">
    <property type="term" value="P:regulation of female receptivity"/>
    <property type="evidence" value="ECO:0000315"/>
    <property type="project" value="MGI"/>
</dbReference>
<dbReference type="GO" id="GO:0001992">
    <property type="term" value="P:regulation of systemic arterial blood pressure by vasopressin"/>
    <property type="evidence" value="ECO:0000316"/>
    <property type="project" value="MGI"/>
</dbReference>
<dbReference type="GO" id="GO:0001975">
    <property type="term" value="P:response to amphetamine"/>
    <property type="evidence" value="ECO:0000316"/>
    <property type="project" value="MGI"/>
</dbReference>
<dbReference type="GO" id="GO:0042220">
    <property type="term" value="P:response to cocaine"/>
    <property type="evidence" value="ECO:0000315"/>
    <property type="project" value="MGI"/>
</dbReference>
<dbReference type="GO" id="GO:0046960">
    <property type="term" value="P:sensitization"/>
    <property type="evidence" value="ECO:0000316"/>
    <property type="project" value="MGI"/>
</dbReference>
<dbReference type="GO" id="GO:0019226">
    <property type="term" value="P:transmission of nerve impulse"/>
    <property type="evidence" value="ECO:0000315"/>
    <property type="project" value="MGI"/>
</dbReference>
<dbReference type="GO" id="GO:0042060">
    <property type="term" value="P:wound healing"/>
    <property type="evidence" value="ECO:0000315"/>
    <property type="project" value="MGI"/>
</dbReference>
<dbReference type="FunFam" id="1.20.1070.10:FF:000045">
    <property type="entry name" value="D(1A) dopamine receptor"/>
    <property type="match status" value="1"/>
</dbReference>
<dbReference type="Gene3D" id="1.20.1070.10">
    <property type="entry name" value="Rhodopsin 7-helix transmembrane proteins"/>
    <property type="match status" value="1"/>
</dbReference>
<dbReference type="InterPro" id="IPR000497">
    <property type="entry name" value="Dopamine_D5_rcpt"/>
</dbReference>
<dbReference type="InterPro" id="IPR000929">
    <property type="entry name" value="Dopamine_rcpt"/>
</dbReference>
<dbReference type="InterPro" id="IPR000276">
    <property type="entry name" value="GPCR_Rhodpsn"/>
</dbReference>
<dbReference type="InterPro" id="IPR017452">
    <property type="entry name" value="GPCR_Rhodpsn_7TM"/>
</dbReference>
<dbReference type="PANTHER" id="PTHR24248">
    <property type="entry name" value="ADRENERGIC RECEPTOR-RELATED G-PROTEIN COUPLED RECEPTOR"/>
    <property type="match status" value="1"/>
</dbReference>
<dbReference type="PANTHER" id="PTHR24248:SF136">
    <property type="entry name" value="D(1B) DOPAMINE RECEPTOR"/>
    <property type="match status" value="1"/>
</dbReference>
<dbReference type="Pfam" id="PF00001">
    <property type="entry name" value="7tm_1"/>
    <property type="match status" value="1"/>
</dbReference>
<dbReference type="PRINTS" id="PR00566">
    <property type="entry name" value="DOPAMINED1BR"/>
</dbReference>
<dbReference type="PRINTS" id="PR00242">
    <property type="entry name" value="DOPAMINER"/>
</dbReference>
<dbReference type="PRINTS" id="PR00237">
    <property type="entry name" value="GPCRRHODOPSN"/>
</dbReference>
<dbReference type="SMART" id="SM01381">
    <property type="entry name" value="7TM_GPCR_Srsx"/>
    <property type="match status" value="1"/>
</dbReference>
<dbReference type="SUPFAM" id="SSF81321">
    <property type="entry name" value="Family A G protein-coupled receptor-like"/>
    <property type="match status" value="1"/>
</dbReference>
<dbReference type="PROSITE" id="PS00237">
    <property type="entry name" value="G_PROTEIN_RECEP_F1_1"/>
    <property type="match status" value="1"/>
</dbReference>
<dbReference type="PROSITE" id="PS50262">
    <property type="entry name" value="G_PROTEIN_RECEP_F1_2"/>
    <property type="match status" value="1"/>
</dbReference>
<evidence type="ECO:0000250" key="1"/>
<evidence type="ECO:0000255" key="2"/>
<evidence type="ECO:0000255" key="3">
    <source>
        <dbReference type="PROSITE-ProRule" id="PRU00521"/>
    </source>
</evidence>
<evidence type="ECO:0000256" key="4">
    <source>
        <dbReference type="SAM" id="MobiDB-lite"/>
    </source>
</evidence>
<evidence type="ECO:0000305" key="5"/>
<reference key="1">
    <citation type="journal article" date="2005" name="Science">
        <title>The transcriptional landscape of the mammalian genome.</title>
        <authorList>
            <person name="Carninci P."/>
            <person name="Kasukawa T."/>
            <person name="Katayama S."/>
            <person name="Gough J."/>
            <person name="Frith M.C."/>
            <person name="Maeda N."/>
            <person name="Oyama R."/>
            <person name="Ravasi T."/>
            <person name="Lenhard B."/>
            <person name="Wells C."/>
            <person name="Kodzius R."/>
            <person name="Shimokawa K."/>
            <person name="Bajic V.B."/>
            <person name="Brenner S.E."/>
            <person name="Batalov S."/>
            <person name="Forrest A.R."/>
            <person name="Zavolan M."/>
            <person name="Davis M.J."/>
            <person name="Wilming L.G."/>
            <person name="Aidinis V."/>
            <person name="Allen J.E."/>
            <person name="Ambesi-Impiombato A."/>
            <person name="Apweiler R."/>
            <person name="Aturaliya R.N."/>
            <person name="Bailey T.L."/>
            <person name="Bansal M."/>
            <person name="Baxter L."/>
            <person name="Beisel K.W."/>
            <person name="Bersano T."/>
            <person name="Bono H."/>
            <person name="Chalk A.M."/>
            <person name="Chiu K.P."/>
            <person name="Choudhary V."/>
            <person name="Christoffels A."/>
            <person name="Clutterbuck D.R."/>
            <person name="Crowe M.L."/>
            <person name="Dalla E."/>
            <person name="Dalrymple B.P."/>
            <person name="de Bono B."/>
            <person name="Della Gatta G."/>
            <person name="di Bernardo D."/>
            <person name="Down T."/>
            <person name="Engstrom P."/>
            <person name="Fagiolini M."/>
            <person name="Faulkner G."/>
            <person name="Fletcher C.F."/>
            <person name="Fukushima T."/>
            <person name="Furuno M."/>
            <person name="Futaki S."/>
            <person name="Gariboldi M."/>
            <person name="Georgii-Hemming P."/>
            <person name="Gingeras T.R."/>
            <person name="Gojobori T."/>
            <person name="Green R.E."/>
            <person name="Gustincich S."/>
            <person name="Harbers M."/>
            <person name="Hayashi Y."/>
            <person name="Hensch T.K."/>
            <person name="Hirokawa N."/>
            <person name="Hill D."/>
            <person name="Huminiecki L."/>
            <person name="Iacono M."/>
            <person name="Ikeo K."/>
            <person name="Iwama A."/>
            <person name="Ishikawa T."/>
            <person name="Jakt M."/>
            <person name="Kanapin A."/>
            <person name="Katoh M."/>
            <person name="Kawasawa Y."/>
            <person name="Kelso J."/>
            <person name="Kitamura H."/>
            <person name="Kitano H."/>
            <person name="Kollias G."/>
            <person name="Krishnan S.P."/>
            <person name="Kruger A."/>
            <person name="Kummerfeld S.K."/>
            <person name="Kurochkin I.V."/>
            <person name="Lareau L.F."/>
            <person name="Lazarevic D."/>
            <person name="Lipovich L."/>
            <person name="Liu J."/>
            <person name="Liuni S."/>
            <person name="McWilliam S."/>
            <person name="Madan Babu M."/>
            <person name="Madera M."/>
            <person name="Marchionni L."/>
            <person name="Matsuda H."/>
            <person name="Matsuzawa S."/>
            <person name="Miki H."/>
            <person name="Mignone F."/>
            <person name="Miyake S."/>
            <person name="Morris K."/>
            <person name="Mottagui-Tabar S."/>
            <person name="Mulder N."/>
            <person name="Nakano N."/>
            <person name="Nakauchi H."/>
            <person name="Ng P."/>
            <person name="Nilsson R."/>
            <person name="Nishiguchi S."/>
            <person name="Nishikawa S."/>
            <person name="Nori F."/>
            <person name="Ohara O."/>
            <person name="Okazaki Y."/>
            <person name="Orlando V."/>
            <person name="Pang K.C."/>
            <person name="Pavan W.J."/>
            <person name="Pavesi G."/>
            <person name="Pesole G."/>
            <person name="Petrovsky N."/>
            <person name="Piazza S."/>
            <person name="Reed J."/>
            <person name="Reid J.F."/>
            <person name="Ring B.Z."/>
            <person name="Ringwald M."/>
            <person name="Rost B."/>
            <person name="Ruan Y."/>
            <person name="Salzberg S.L."/>
            <person name="Sandelin A."/>
            <person name="Schneider C."/>
            <person name="Schoenbach C."/>
            <person name="Sekiguchi K."/>
            <person name="Semple C.A."/>
            <person name="Seno S."/>
            <person name="Sessa L."/>
            <person name="Sheng Y."/>
            <person name="Shibata Y."/>
            <person name="Shimada H."/>
            <person name="Shimada K."/>
            <person name="Silva D."/>
            <person name="Sinclair B."/>
            <person name="Sperling S."/>
            <person name="Stupka E."/>
            <person name="Sugiura K."/>
            <person name="Sultana R."/>
            <person name="Takenaka Y."/>
            <person name="Taki K."/>
            <person name="Tammoja K."/>
            <person name="Tan S.L."/>
            <person name="Tang S."/>
            <person name="Taylor M.S."/>
            <person name="Tegner J."/>
            <person name="Teichmann S.A."/>
            <person name="Ueda H.R."/>
            <person name="van Nimwegen E."/>
            <person name="Verardo R."/>
            <person name="Wei C.L."/>
            <person name="Yagi K."/>
            <person name="Yamanishi H."/>
            <person name="Zabarovsky E."/>
            <person name="Zhu S."/>
            <person name="Zimmer A."/>
            <person name="Hide W."/>
            <person name="Bult C."/>
            <person name="Grimmond S.M."/>
            <person name="Teasdale R.D."/>
            <person name="Liu E.T."/>
            <person name="Brusic V."/>
            <person name="Quackenbush J."/>
            <person name="Wahlestedt C."/>
            <person name="Mattick J.S."/>
            <person name="Hume D.A."/>
            <person name="Kai C."/>
            <person name="Sasaki D."/>
            <person name="Tomaru Y."/>
            <person name="Fukuda S."/>
            <person name="Kanamori-Katayama M."/>
            <person name="Suzuki M."/>
            <person name="Aoki J."/>
            <person name="Arakawa T."/>
            <person name="Iida J."/>
            <person name="Imamura K."/>
            <person name="Itoh M."/>
            <person name="Kato T."/>
            <person name="Kawaji H."/>
            <person name="Kawagashira N."/>
            <person name="Kawashima T."/>
            <person name="Kojima M."/>
            <person name="Kondo S."/>
            <person name="Konno H."/>
            <person name="Nakano K."/>
            <person name="Ninomiya N."/>
            <person name="Nishio T."/>
            <person name="Okada M."/>
            <person name="Plessy C."/>
            <person name="Shibata K."/>
            <person name="Shiraki T."/>
            <person name="Suzuki S."/>
            <person name="Tagami M."/>
            <person name="Waki K."/>
            <person name="Watahiki A."/>
            <person name="Okamura-Oho Y."/>
            <person name="Suzuki H."/>
            <person name="Kawai J."/>
            <person name="Hayashizaki Y."/>
        </authorList>
    </citation>
    <scope>NUCLEOTIDE SEQUENCE [LARGE SCALE MRNA]</scope>
    <source>
        <strain>C57BL/6J</strain>
        <tissue>Brain</tissue>
    </source>
</reference>
<reference key="2">
    <citation type="journal article" date="2003" name="Proc. Natl. Acad. Sci. U.S.A.">
        <title>The G protein-coupled receptor repertoires of human and mouse.</title>
        <authorList>
            <person name="Vassilatis D.K."/>
            <person name="Hohmann J.G."/>
            <person name="Zeng H."/>
            <person name="Li F."/>
            <person name="Ranchalis J.E."/>
            <person name="Mortrud M.T."/>
            <person name="Brown A."/>
            <person name="Rodriguez S.S."/>
            <person name="Weller J.R."/>
            <person name="Wright A.C."/>
            <person name="Bergmann J.E."/>
            <person name="Gaitanaris G.A."/>
        </authorList>
    </citation>
    <scope>NUCLEOTIDE SEQUENCE [LARGE SCALE MRNA] OF 112-252</scope>
</reference>
<reference key="3">
    <citation type="journal article" date="1993" name="Genomics">
        <title>Identification, chromosomal location, and genome organization of mammalian G-protein-coupled receptors.</title>
        <authorList>
            <person name="Wilkie T.M."/>
            <person name="Chen Y."/>
            <person name="Gilbert D.J."/>
            <person name="Moore K.J."/>
            <person name="Yu L."/>
            <person name="Simon M.I."/>
            <person name="Copeland N.G."/>
            <person name="Jenkins N.A."/>
        </authorList>
    </citation>
    <scope>NUCLEOTIDE SEQUENCE [MRNA] OF 138-298</scope>
    <source>
        <tissue>Testis</tissue>
    </source>
</reference>
<keyword id="KW-1003">Cell membrane</keyword>
<keyword id="KW-1015">Disulfide bond</keyword>
<keyword id="KW-0297">G-protein coupled receptor</keyword>
<keyword id="KW-0325">Glycoprotein</keyword>
<keyword id="KW-0449">Lipoprotein</keyword>
<keyword id="KW-0472">Membrane</keyword>
<keyword id="KW-0564">Palmitate</keyword>
<keyword id="KW-0675">Receptor</keyword>
<keyword id="KW-1185">Reference proteome</keyword>
<keyword id="KW-0807">Transducer</keyword>
<keyword id="KW-0812">Transmembrane</keyword>
<keyword id="KW-1133">Transmembrane helix</keyword>
<feature type="chain" id="PRO_0000069407" description="D(1B) dopamine receptor">
    <location>
        <begin position="1"/>
        <end position="478"/>
    </location>
</feature>
<feature type="topological domain" description="Extracellular" evidence="2">
    <location>
        <begin position="1"/>
        <end position="38"/>
    </location>
</feature>
<feature type="transmembrane region" description="Helical; Name=1" evidence="2">
    <location>
        <begin position="39"/>
        <end position="64"/>
    </location>
</feature>
<feature type="topological domain" description="Cytoplasmic" evidence="2">
    <location>
        <begin position="65"/>
        <end position="75"/>
    </location>
</feature>
<feature type="transmembrane region" description="Helical; Name=2" evidence="2">
    <location>
        <begin position="76"/>
        <end position="102"/>
    </location>
</feature>
<feature type="topological domain" description="Extracellular" evidence="2">
    <location>
        <begin position="103"/>
        <end position="111"/>
    </location>
</feature>
<feature type="transmembrane region" description="Helical; Name=3" evidence="2">
    <location>
        <begin position="112"/>
        <end position="134"/>
    </location>
</feature>
<feature type="topological domain" description="Cytoplasmic" evidence="2">
    <location>
        <begin position="135"/>
        <end position="153"/>
    </location>
</feature>
<feature type="transmembrane region" description="Helical; Name=4" evidence="2">
    <location>
        <begin position="154"/>
        <end position="179"/>
    </location>
</feature>
<feature type="topological domain" description="Extracellular" evidence="2">
    <location>
        <begin position="180"/>
        <end position="215"/>
    </location>
</feature>
<feature type="transmembrane region" description="Helical; Name=5" evidence="2">
    <location>
        <begin position="216"/>
        <end position="240"/>
    </location>
</feature>
<feature type="topological domain" description="Cytoplasmic" evidence="2">
    <location>
        <begin position="241"/>
        <end position="289"/>
    </location>
</feature>
<feature type="transmembrane region" description="Helical; Name=6" evidence="2">
    <location>
        <begin position="290"/>
        <end position="317"/>
    </location>
</feature>
<feature type="topological domain" description="Extracellular" evidence="2">
    <location>
        <begin position="318"/>
        <end position="335"/>
    </location>
</feature>
<feature type="transmembrane region" description="Helical; Name=7" evidence="2">
    <location>
        <begin position="336"/>
        <end position="357"/>
    </location>
</feature>
<feature type="topological domain" description="Cytoplasmic" evidence="2">
    <location>
        <begin position="358"/>
        <end position="478"/>
    </location>
</feature>
<feature type="region of interest" description="Disordered" evidence="4">
    <location>
        <begin position="416"/>
        <end position="446"/>
    </location>
</feature>
<feature type="compositionally biased region" description="Acidic residues" evidence="4">
    <location>
        <begin position="420"/>
        <end position="430"/>
    </location>
</feature>
<feature type="lipid moiety-binding region" description="S-palmitoyl cysteine" evidence="1">
    <location>
        <position position="370"/>
    </location>
</feature>
<feature type="glycosylation site" description="N-linked (GlcNAc...) asparagine" evidence="2">
    <location>
        <position position="7"/>
    </location>
</feature>
<feature type="disulfide bond" evidence="3">
    <location>
        <begin position="111"/>
        <end position="211"/>
    </location>
</feature>
<feature type="sequence conflict" description="In Ref. 3; AAA16844." evidence="5" ref="3">
    <original>P</original>
    <variation>L</variation>
    <location>
        <position position="231"/>
    </location>
</feature>
<proteinExistence type="evidence at transcript level"/>
<sequence length="478" mass="53076">MLPPGRNGTAHRARLGLQRQLAQVDAPGGSAAPLGPAQVVTAGLLTLLIVWTLLGNVLVCAAIVRSRHLRAKMTNIFIVSLAVSDLFVALLVMPWKAVAEVAGYWPFGAFCDIWVAFDIMCSTASILNLCIISVDRYWAISRPFRYERKMTQRVALVMVALAWTLSILISFIPVQLNWHRDKAGSQGREGLLSNETPWEEGWELDGRTENCDSSLNRTYAISSSLISFYIPVAIMIVTYTRIYRIAQVQIRRISSLERAAEHAQSCRSRGACEPDPSLRASIKKETKVFKTLSVIMGVFVCCWLPFFILNCMVPFCSSGDAQGPRTGFPCVSETTFDIFVWFGWANSSLNPIIYAFNADFRKVFAQLLGCSHLCFRTPVQTVNISNELISYNQDTVFHREIAAAYVHMIPNAVSSGDREVGEEEEAEEEGPFDHMSQISPTTPDGDLAAESVWELDCEEEVSLGKISPLTPNCFHKTA</sequence>
<accession>Q8BLD9</accession>
<accession>Q61439</accession>
<accession>Q80UB7</accession>
<organism>
    <name type="scientific">Mus musculus</name>
    <name type="common">Mouse</name>
    <dbReference type="NCBI Taxonomy" id="10090"/>
    <lineage>
        <taxon>Eukaryota</taxon>
        <taxon>Metazoa</taxon>
        <taxon>Chordata</taxon>
        <taxon>Craniata</taxon>
        <taxon>Vertebrata</taxon>
        <taxon>Euteleostomi</taxon>
        <taxon>Mammalia</taxon>
        <taxon>Eutheria</taxon>
        <taxon>Euarchontoglires</taxon>
        <taxon>Glires</taxon>
        <taxon>Rodentia</taxon>
        <taxon>Myomorpha</taxon>
        <taxon>Muroidea</taxon>
        <taxon>Muridae</taxon>
        <taxon>Murinae</taxon>
        <taxon>Mus</taxon>
        <taxon>Mus</taxon>
    </lineage>
</organism>
<name>DRD5_MOUSE</name>
<protein>
    <recommendedName>
        <fullName>D(1B) dopamine receptor</fullName>
    </recommendedName>
    <alternativeName>
        <fullName>D(5) dopamine receptor</fullName>
    </alternativeName>
    <alternativeName>
        <fullName>Dopamine D5 receptor</fullName>
    </alternativeName>
</protein>
<gene>
    <name type="primary">Drd5</name>
</gene>